<name>TDA7_YEASO</name>
<reference key="1">
    <citation type="journal article" date="2011" name="PLoS Genet.">
        <title>Whole-genome comparison reveals novel genetic elements that characterize the genome of industrial strains of Saccharomyces cerevisiae.</title>
        <authorList>
            <person name="Borneman A.R."/>
            <person name="Desany B.A."/>
            <person name="Riches D."/>
            <person name="Affourtit J.P."/>
            <person name="Forgan A.H."/>
            <person name="Pretorius I.S."/>
            <person name="Egholm M."/>
            <person name="Chambers P.J."/>
        </authorList>
    </citation>
    <scope>NUCLEOTIDE SEQUENCE [LARGE SCALE GENOMIC DNA]</scope>
    <source>
        <strain>FostersO</strain>
    </source>
</reference>
<keyword id="KW-0325">Glycoprotein</keyword>
<keyword id="KW-1017">Isopeptide bond</keyword>
<keyword id="KW-0472">Membrane</keyword>
<keyword id="KW-0597">Phosphoprotein</keyword>
<keyword id="KW-0812">Transmembrane</keyword>
<keyword id="KW-1133">Transmembrane helix</keyword>
<keyword id="KW-0832">Ubl conjugation</keyword>
<keyword id="KW-0926">Vacuole</keyword>
<protein>
    <recommendedName>
        <fullName>Topoisomerase I damage affected protein 7</fullName>
    </recommendedName>
</protein>
<evidence type="ECO:0000250" key="1"/>
<evidence type="ECO:0000250" key="2">
    <source>
        <dbReference type="UniProtKB" id="P53882"/>
    </source>
</evidence>
<evidence type="ECO:0000255" key="3"/>
<evidence type="ECO:0000256" key="4">
    <source>
        <dbReference type="SAM" id="MobiDB-lite"/>
    </source>
</evidence>
<evidence type="ECO:0000305" key="5"/>
<sequence length="636" mass="67395">MNSNSTIGRTTLGESDTISLSFSEPSSSLNSRSTDVVFASTSTLVPQQGSLTSLPPVSSTATPTYYSTSLTYDETLHTSIDVSSTSTLVSSTDSSSSSEQDTYSSQYDPATSSYSIITPSMSIFSSTSPMSSSSSITSEWSSLTSTTPTLSXSATSLSSSWSSLSSPSSLLVSSSLSLSLSSSYSDTKLFSFDSRSSIFSPSTPTVISPSYTYLSSISATSFQISTTSELSXSWFSTISSPSTTSNKDTTFPSSSRNTSTSFYSSSLSSTNDFSTISKSSKLSPSASSSTVSISTISVPTSSSVSSSSSKVPSNRPSSSSSSDDTTSAYSSTYTFQSLQSTTSSSIPPXTQTPSTSTISTSPIPTSSQVFNTXAISSSEDSKTIYYFYTQTYDITDSSTTFVTGLPTTIAVAKSEVTSFSAPSSTITADMSFYQHWLDGSLDNNKNQGTSKTNTGTIVGSVVGSVGGILICVLVVWFMLVRKRKAKRHFKENDSFCHEIGRRTGFPTTAQAKEASLQAQDSGSQQRNTETASANNPFSNEFNFKARGNPPPVPPPRNVTAXNGSFQNMRSNFMDQENRFSYGSSFTYSSLGSSTQGGFSTLSSNSIRLGXGLDNDISHDERNTVQNNSQGFLREII</sequence>
<comment type="subcellular location">
    <subcellularLocation>
        <location evidence="1">Vacuole membrane</location>
        <topology evidence="1">Single-pass membrane protein</topology>
    </subcellularLocation>
</comment>
<comment type="similarity">
    <text evidence="5">Belongs to the TDA7 family.</text>
</comment>
<proteinExistence type="inferred from homology"/>
<dbReference type="EMBL" id="AEEZ01000083">
    <property type="protein sequence ID" value="EGA60795.1"/>
    <property type="molecule type" value="Genomic_DNA"/>
</dbReference>
<dbReference type="GlyCosmos" id="E7NM81">
    <property type="glycosylation" value="6 sites, No reported glycans"/>
</dbReference>
<dbReference type="HOGENOM" id="CLU_029057_0_0_1"/>
<dbReference type="OMA" id="FYQHWLD"/>
<dbReference type="OrthoDB" id="8235at4893"/>
<dbReference type="GO" id="GO:0005774">
    <property type="term" value="C:vacuolar membrane"/>
    <property type="evidence" value="ECO:0007669"/>
    <property type="project" value="UniProtKB-SubCell"/>
</dbReference>
<accession>E7NM81</accession>
<organism>
    <name type="scientific">Saccharomyces cerevisiae (strain FostersO)</name>
    <name type="common">Baker's yeast</name>
    <dbReference type="NCBI Taxonomy" id="764101"/>
    <lineage>
        <taxon>Eukaryota</taxon>
        <taxon>Fungi</taxon>
        <taxon>Dikarya</taxon>
        <taxon>Ascomycota</taxon>
        <taxon>Saccharomycotina</taxon>
        <taxon>Saccharomycetes</taxon>
        <taxon>Saccharomycetales</taxon>
        <taxon>Saccharomycetaceae</taxon>
        <taxon>Saccharomyces</taxon>
    </lineage>
</organism>
<feature type="chain" id="PRO_0000410752" description="Topoisomerase I damage affected protein 7">
    <location>
        <begin position="1"/>
        <end position="636"/>
    </location>
</feature>
<feature type="transmembrane region" description="Helical" evidence="3">
    <location>
        <begin position="457"/>
        <end position="477"/>
    </location>
</feature>
<feature type="region of interest" description="Disordered" evidence="4">
    <location>
        <begin position="1"/>
        <end position="32"/>
    </location>
</feature>
<feature type="region of interest" description="Disordered" evidence="4">
    <location>
        <begin position="87"/>
        <end position="109"/>
    </location>
</feature>
<feature type="region of interest" description="Disordered" evidence="4">
    <location>
        <begin position="237"/>
        <end position="271"/>
    </location>
</feature>
<feature type="region of interest" description="Disordered" evidence="4">
    <location>
        <begin position="299"/>
        <end position="326"/>
    </location>
</feature>
<feature type="region of interest" description="Disordered" evidence="4">
    <location>
        <begin position="339"/>
        <end position="363"/>
    </location>
</feature>
<feature type="region of interest" description="Disordered" evidence="4">
    <location>
        <begin position="510"/>
        <end position="553"/>
    </location>
</feature>
<feature type="compositionally biased region" description="Polar residues" evidence="4">
    <location>
        <begin position="1"/>
        <end position="18"/>
    </location>
</feature>
<feature type="compositionally biased region" description="Low complexity" evidence="4">
    <location>
        <begin position="19"/>
        <end position="32"/>
    </location>
</feature>
<feature type="compositionally biased region" description="Low complexity" evidence="4">
    <location>
        <begin position="87"/>
        <end position="108"/>
    </location>
</feature>
<feature type="compositionally biased region" description="Polar residues" evidence="4">
    <location>
        <begin position="510"/>
        <end position="541"/>
    </location>
</feature>
<feature type="modified residue" description="Phosphoserine" evidence="2">
    <location>
        <position position="628"/>
    </location>
</feature>
<feature type="glycosylation site" description="N-linked (GlcNAc...) asparagine" evidence="3">
    <location>
        <position position="4"/>
    </location>
</feature>
<feature type="glycosylation site" description="N-linked (GlcNAc...) asparagine" evidence="3">
    <location>
        <position position="257"/>
    </location>
</feature>
<feature type="glycosylation site" description="N-linked (GlcNAc...) asparagine" evidence="3">
    <location>
        <position position="492"/>
    </location>
</feature>
<feature type="glycosylation site" description="N-linked (GlcNAc...) asparagine" evidence="3">
    <location>
        <position position="557"/>
    </location>
</feature>
<feature type="glycosylation site" description="N-linked (GlcNAc...) asparagine" evidence="3">
    <location>
        <position position="562"/>
    </location>
</feature>
<feature type="glycosylation site" description="N-linked (GlcNAc...) asparagine" evidence="3">
    <location>
        <position position="626"/>
    </location>
</feature>
<feature type="cross-link" description="Glycyl lysine isopeptide (Lys-Gly) (interchain with G-Cter in ubiquitin)" evidence="2">
    <location>
        <position position="512"/>
    </location>
</feature>
<gene>
    <name type="primary">TDA7</name>
    <name type="ORF">FOSTERSO_3962</name>
</gene>